<keyword id="KW-0028">Amino-acid biosynthesis</keyword>
<keyword id="KW-0057">Aromatic amino acid biosynthesis</keyword>
<keyword id="KW-0067">ATP-binding</keyword>
<keyword id="KW-0963">Cytoplasm</keyword>
<keyword id="KW-0418">Kinase</keyword>
<keyword id="KW-0460">Magnesium</keyword>
<keyword id="KW-0479">Metal-binding</keyword>
<keyword id="KW-0547">Nucleotide-binding</keyword>
<keyword id="KW-1185">Reference proteome</keyword>
<keyword id="KW-0808">Transferase</keyword>
<sequence>MRNRRNIFLIGPMGAGKTTVGRLLARALGMEFWDSDKEIERRTGVTVPMIFEYEGEAGFRRRESEVIADLTGKERIVLATGGGSVLAAENREHLAARGLVIYLQCSVQKQLERTHKDMNRPLLQTENPRQRLEELLRVRDPIYRELADYVVDTGQHSSRSAVRRIINAYEKSGTRLRTE</sequence>
<dbReference type="EC" id="2.7.1.71" evidence="1"/>
<dbReference type="EMBL" id="AE017282">
    <property type="protein sequence ID" value="AAU90401.1"/>
    <property type="molecule type" value="Genomic_DNA"/>
</dbReference>
<dbReference type="RefSeq" id="WP_010959691.1">
    <property type="nucleotide sequence ID" value="NC_002977.6"/>
</dbReference>
<dbReference type="SMR" id="Q60BY3"/>
<dbReference type="STRING" id="243233.MCA0330"/>
<dbReference type="GeneID" id="88222671"/>
<dbReference type="KEGG" id="mca:MCA0330"/>
<dbReference type="eggNOG" id="COG0703">
    <property type="taxonomic scope" value="Bacteria"/>
</dbReference>
<dbReference type="HOGENOM" id="CLU_057607_2_2_6"/>
<dbReference type="UniPathway" id="UPA00053">
    <property type="reaction ID" value="UER00088"/>
</dbReference>
<dbReference type="Proteomes" id="UP000006821">
    <property type="component" value="Chromosome"/>
</dbReference>
<dbReference type="GO" id="GO:0005829">
    <property type="term" value="C:cytosol"/>
    <property type="evidence" value="ECO:0007669"/>
    <property type="project" value="TreeGrafter"/>
</dbReference>
<dbReference type="GO" id="GO:0005524">
    <property type="term" value="F:ATP binding"/>
    <property type="evidence" value="ECO:0007669"/>
    <property type="project" value="UniProtKB-UniRule"/>
</dbReference>
<dbReference type="GO" id="GO:0000287">
    <property type="term" value="F:magnesium ion binding"/>
    <property type="evidence" value="ECO:0007669"/>
    <property type="project" value="UniProtKB-UniRule"/>
</dbReference>
<dbReference type="GO" id="GO:0004765">
    <property type="term" value="F:shikimate kinase activity"/>
    <property type="evidence" value="ECO:0007669"/>
    <property type="project" value="UniProtKB-UniRule"/>
</dbReference>
<dbReference type="GO" id="GO:0008652">
    <property type="term" value="P:amino acid biosynthetic process"/>
    <property type="evidence" value="ECO:0007669"/>
    <property type="project" value="UniProtKB-KW"/>
</dbReference>
<dbReference type="GO" id="GO:0009073">
    <property type="term" value="P:aromatic amino acid family biosynthetic process"/>
    <property type="evidence" value="ECO:0007669"/>
    <property type="project" value="UniProtKB-KW"/>
</dbReference>
<dbReference type="GO" id="GO:0009423">
    <property type="term" value="P:chorismate biosynthetic process"/>
    <property type="evidence" value="ECO:0007669"/>
    <property type="project" value="UniProtKB-UniRule"/>
</dbReference>
<dbReference type="CDD" id="cd00464">
    <property type="entry name" value="SK"/>
    <property type="match status" value="1"/>
</dbReference>
<dbReference type="Gene3D" id="3.40.50.300">
    <property type="entry name" value="P-loop containing nucleotide triphosphate hydrolases"/>
    <property type="match status" value="1"/>
</dbReference>
<dbReference type="HAMAP" id="MF_00109">
    <property type="entry name" value="Shikimate_kinase"/>
    <property type="match status" value="1"/>
</dbReference>
<dbReference type="InterPro" id="IPR027417">
    <property type="entry name" value="P-loop_NTPase"/>
</dbReference>
<dbReference type="InterPro" id="IPR031322">
    <property type="entry name" value="Shikimate/glucono_kinase"/>
</dbReference>
<dbReference type="InterPro" id="IPR000623">
    <property type="entry name" value="Shikimate_kinase/TSH1"/>
</dbReference>
<dbReference type="InterPro" id="IPR023000">
    <property type="entry name" value="Shikimate_kinase_CS"/>
</dbReference>
<dbReference type="NCBIfam" id="NF003456">
    <property type="entry name" value="PRK05057.1"/>
    <property type="match status" value="1"/>
</dbReference>
<dbReference type="PANTHER" id="PTHR21087">
    <property type="entry name" value="SHIKIMATE KINASE"/>
    <property type="match status" value="1"/>
</dbReference>
<dbReference type="PANTHER" id="PTHR21087:SF16">
    <property type="entry name" value="SHIKIMATE KINASE 1, CHLOROPLASTIC"/>
    <property type="match status" value="1"/>
</dbReference>
<dbReference type="Pfam" id="PF01202">
    <property type="entry name" value="SKI"/>
    <property type="match status" value="1"/>
</dbReference>
<dbReference type="PRINTS" id="PR01100">
    <property type="entry name" value="SHIKIMTKNASE"/>
</dbReference>
<dbReference type="SUPFAM" id="SSF52540">
    <property type="entry name" value="P-loop containing nucleoside triphosphate hydrolases"/>
    <property type="match status" value="1"/>
</dbReference>
<dbReference type="PROSITE" id="PS01128">
    <property type="entry name" value="SHIKIMATE_KINASE"/>
    <property type="match status" value="1"/>
</dbReference>
<organism>
    <name type="scientific">Methylococcus capsulatus (strain ATCC 33009 / NCIMB 11132 / Bath)</name>
    <dbReference type="NCBI Taxonomy" id="243233"/>
    <lineage>
        <taxon>Bacteria</taxon>
        <taxon>Pseudomonadati</taxon>
        <taxon>Pseudomonadota</taxon>
        <taxon>Gammaproteobacteria</taxon>
        <taxon>Methylococcales</taxon>
        <taxon>Methylococcaceae</taxon>
        <taxon>Methylococcus</taxon>
    </lineage>
</organism>
<name>AROK_METCA</name>
<accession>Q60BY3</accession>
<gene>
    <name evidence="1" type="primary">aroK</name>
    <name type="ordered locus">MCA0330</name>
</gene>
<protein>
    <recommendedName>
        <fullName evidence="1">Shikimate kinase</fullName>
        <shortName evidence="1">SK</shortName>
        <ecNumber evidence="1">2.7.1.71</ecNumber>
    </recommendedName>
</protein>
<comment type="function">
    <text evidence="1">Catalyzes the specific phosphorylation of the 3-hydroxyl group of shikimic acid using ATP as a cosubstrate.</text>
</comment>
<comment type="catalytic activity">
    <reaction evidence="1">
        <text>shikimate + ATP = 3-phosphoshikimate + ADP + H(+)</text>
        <dbReference type="Rhea" id="RHEA:13121"/>
        <dbReference type="ChEBI" id="CHEBI:15378"/>
        <dbReference type="ChEBI" id="CHEBI:30616"/>
        <dbReference type="ChEBI" id="CHEBI:36208"/>
        <dbReference type="ChEBI" id="CHEBI:145989"/>
        <dbReference type="ChEBI" id="CHEBI:456216"/>
        <dbReference type="EC" id="2.7.1.71"/>
    </reaction>
</comment>
<comment type="cofactor">
    <cofactor evidence="1">
        <name>Mg(2+)</name>
        <dbReference type="ChEBI" id="CHEBI:18420"/>
    </cofactor>
    <text evidence="1">Binds 1 Mg(2+) ion per subunit.</text>
</comment>
<comment type="pathway">
    <text evidence="1">Metabolic intermediate biosynthesis; chorismate biosynthesis; chorismate from D-erythrose 4-phosphate and phosphoenolpyruvate: step 5/7.</text>
</comment>
<comment type="subunit">
    <text evidence="1">Monomer.</text>
</comment>
<comment type="subcellular location">
    <subcellularLocation>
        <location evidence="1">Cytoplasm</location>
    </subcellularLocation>
</comment>
<comment type="similarity">
    <text evidence="1">Belongs to the shikimate kinase family.</text>
</comment>
<evidence type="ECO:0000255" key="1">
    <source>
        <dbReference type="HAMAP-Rule" id="MF_00109"/>
    </source>
</evidence>
<reference key="1">
    <citation type="journal article" date="2004" name="PLoS Biol.">
        <title>Genomic insights into methanotrophy: the complete genome sequence of Methylococcus capsulatus (Bath).</title>
        <authorList>
            <person name="Ward N.L."/>
            <person name="Larsen O."/>
            <person name="Sakwa J."/>
            <person name="Bruseth L."/>
            <person name="Khouri H.M."/>
            <person name="Durkin A.S."/>
            <person name="Dimitrov G."/>
            <person name="Jiang L."/>
            <person name="Scanlan D."/>
            <person name="Kang K.H."/>
            <person name="Lewis M.R."/>
            <person name="Nelson K.E."/>
            <person name="Methe B.A."/>
            <person name="Wu M."/>
            <person name="Heidelberg J.F."/>
            <person name="Paulsen I.T."/>
            <person name="Fouts D.E."/>
            <person name="Ravel J."/>
            <person name="Tettelin H."/>
            <person name="Ren Q."/>
            <person name="Read T.D."/>
            <person name="DeBoy R.T."/>
            <person name="Seshadri R."/>
            <person name="Salzberg S.L."/>
            <person name="Jensen H.B."/>
            <person name="Birkeland N.K."/>
            <person name="Nelson W.C."/>
            <person name="Dodson R.J."/>
            <person name="Grindhaug S.H."/>
            <person name="Holt I.E."/>
            <person name="Eidhammer I."/>
            <person name="Jonasen I."/>
            <person name="Vanaken S."/>
            <person name="Utterback T.R."/>
            <person name="Feldblyum T.V."/>
            <person name="Fraser C.M."/>
            <person name="Lillehaug J.R."/>
            <person name="Eisen J.A."/>
        </authorList>
    </citation>
    <scope>NUCLEOTIDE SEQUENCE [LARGE SCALE GENOMIC DNA]</scope>
    <source>
        <strain>ATCC 33009 / NCIMB 11132 / Bath</strain>
    </source>
</reference>
<feature type="chain" id="PRO_0000237894" description="Shikimate kinase">
    <location>
        <begin position="1"/>
        <end position="179"/>
    </location>
</feature>
<feature type="binding site" evidence="1">
    <location>
        <begin position="14"/>
        <end position="19"/>
    </location>
    <ligand>
        <name>ATP</name>
        <dbReference type="ChEBI" id="CHEBI:30616"/>
    </ligand>
</feature>
<feature type="binding site" evidence="1">
    <location>
        <position position="18"/>
    </location>
    <ligand>
        <name>Mg(2+)</name>
        <dbReference type="ChEBI" id="CHEBI:18420"/>
    </ligand>
</feature>
<feature type="binding site" evidence="1">
    <location>
        <position position="36"/>
    </location>
    <ligand>
        <name>substrate</name>
    </ligand>
</feature>
<feature type="binding site" evidence="1">
    <location>
        <position position="60"/>
    </location>
    <ligand>
        <name>substrate</name>
    </ligand>
</feature>
<feature type="binding site" evidence="1">
    <location>
        <position position="82"/>
    </location>
    <ligand>
        <name>substrate</name>
    </ligand>
</feature>
<feature type="binding site" evidence="1">
    <location>
        <position position="120"/>
    </location>
    <ligand>
        <name>ATP</name>
        <dbReference type="ChEBI" id="CHEBI:30616"/>
    </ligand>
</feature>
<feature type="binding site" evidence="1">
    <location>
        <position position="139"/>
    </location>
    <ligand>
        <name>substrate</name>
    </ligand>
</feature>
<proteinExistence type="inferred from homology"/>